<name>RF2_LEPBL</name>
<feature type="chain" id="PRO_1000004995" description="Peptide chain release factor 2">
    <location>
        <begin position="1"/>
        <end position="367"/>
    </location>
</feature>
<feature type="modified residue" description="N5-methylglutamine" evidence="1">
    <location>
        <position position="254"/>
    </location>
</feature>
<keyword id="KW-0963">Cytoplasm</keyword>
<keyword id="KW-0488">Methylation</keyword>
<keyword id="KW-0648">Protein biosynthesis</keyword>
<dbReference type="EMBL" id="CP000348">
    <property type="protein sequence ID" value="ABJ79915.1"/>
    <property type="molecule type" value="Genomic_DNA"/>
</dbReference>
<dbReference type="RefSeq" id="WP_011670880.1">
    <property type="nucleotide sequence ID" value="NC_008508.1"/>
</dbReference>
<dbReference type="SMR" id="Q04YD0"/>
<dbReference type="KEGG" id="lbl:LBL_2551"/>
<dbReference type="HOGENOM" id="CLU_036856_6_0_12"/>
<dbReference type="GO" id="GO:0005737">
    <property type="term" value="C:cytoplasm"/>
    <property type="evidence" value="ECO:0007669"/>
    <property type="project" value="UniProtKB-SubCell"/>
</dbReference>
<dbReference type="GO" id="GO:0016149">
    <property type="term" value="F:translation release factor activity, codon specific"/>
    <property type="evidence" value="ECO:0007669"/>
    <property type="project" value="UniProtKB-UniRule"/>
</dbReference>
<dbReference type="FunFam" id="3.30.160.20:FF:000010">
    <property type="entry name" value="Peptide chain release factor 2"/>
    <property type="match status" value="1"/>
</dbReference>
<dbReference type="Gene3D" id="3.30.160.20">
    <property type="match status" value="1"/>
</dbReference>
<dbReference type="Gene3D" id="3.30.70.1660">
    <property type="match status" value="1"/>
</dbReference>
<dbReference type="Gene3D" id="1.20.58.410">
    <property type="entry name" value="Release factor"/>
    <property type="match status" value="1"/>
</dbReference>
<dbReference type="HAMAP" id="MF_00094">
    <property type="entry name" value="Rel_fac_2"/>
    <property type="match status" value="1"/>
</dbReference>
<dbReference type="InterPro" id="IPR005139">
    <property type="entry name" value="PCRF"/>
</dbReference>
<dbReference type="InterPro" id="IPR000352">
    <property type="entry name" value="Pep_chain_release_fac_I"/>
</dbReference>
<dbReference type="InterPro" id="IPR045853">
    <property type="entry name" value="Pep_chain_release_fac_I_sf"/>
</dbReference>
<dbReference type="InterPro" id="IPR004374">
    <property type="entry name" value="PrfB"/>
</dbReference>
<dbReference type="NCBIfam" id="TIGR00020">
    <property type="entry name" value="prfB"/>
    <property type="match status" value="1"/>
</dbReference>
<dbReference type="PANTHER" id="PTHR43116:SF3">
    <property type="entry name" value="CLASS I PEPTIDE CHAIN RELEASE FACTOR"/>
    <property type="match status" value="1"/>
</dbReference>
<dbReference type="PANTHER" id="PTHR43116">
    <property type="entry name" value="PEPTIDE CHAIN RELEASE FACTOR 2"/>
    <property type="match status" value="1"/>
</dbReference>
<dbReference type="Pfam" id="PF03462">
    <property type="entry name" value="PCRF"/>
    <property type="match status" value="1"/>
</dbReference>
<dbReference type="Pfam" id="PF00472">
    <property type="entry name" value="RF-1"/>
    <property type="match status" value="1"/>
</dbReference>
<dbReference type="SMART" id="SM00937">
    <property type="entry name" value="PCRF"/>
    <property type="match status" value="1"/>
</dbReference>
<dbReference type="SUPFAM" id="SSF75620">
    <property type="entry name" value="Release factor"/>
    <property type="match status" value="1"/>
</dbReference>
<dbReference type="PROSITE" id="PS00745">
    <property type="entry name" value="RF_PROK_I"/>
    <property type="match status" value="1"/>
</dbReference>
<evidence type="ECO:0000255" key="1">
    <source>
        <dbReference type="HAMAP-Rule" id="MF_00094"/>
    </source>
</evidence>
<sequence>MEVKSAKELKRVSKELQENFLNRWKLLNLEQDKDRLKALNEKSEDPDLWNNPEEARIVSQKKNELEKKLTPWFTIQQDILDFPDLVELTLDEKGENGIGELSMEYNRLQEKFEELELLGALKNSEDLKPAFLNIHPGAGGTESQDWAEMLLRMYIRYFEKKGYQYSLIDIQAGDGAGIKNVTLHVVGDFAFGFLKGENGIHRLVRISPFDANKRRHTSFVSVHVSPEIDDEIDIKIEEKDIRVDVYRSSGAGGQHVNTTDSAVRITHLPSGIVVACQNERSQIKNRDTAFKMLKARLYEMEQEKAKEELEKKSGEKKDIAWGSQIRSYVFHPYNLVKDHRTDHETGNVAAVMDGDIEPFILAYLKTL</sequence>
<proteinExistence type="inferred from homology"/>
<gene>
    <name evidence="1" type="primary">prfB</name>
    <name type="ordered locus">LBL_2551</name>
</gene>
<reference key="1">
    <citation type="journal article" date="2006" name="Proc. Natl. Acad. Sci. U.S.A.">
        <title>Genome reduction in Leptospira borgpetersenii reflects limited transmission potential.</title>
        <authorList>
            <person name="Bulach D.M."/>
            <person name="Zuerner R.L."/>
            <person name="Wilson P."/>
            <person name="Seemann T."/>
            <person name="McGrath A."/>
            <person name="Cullen P.A."/>
            <person name="Davis J."/>
            <person name="Johnson M."/>
            <person name="Kuczek E."/>
            <person name="Alt D.P."/>
            <person name="Peterson-Burch B."/>
            <person name="Coppel R.L."/>
            <person name="Rood J.I."/>
            <person name="Davies J.K."/>
            <person name="Adler B."/>
        </authorList>
    </citation>
    <scope>NUCLEOTIDE SEQUENCE [LARGE SCALE GENOMIC DNA]</scope>
    <source>
        <strain>L550</strain>
    </source>
</reference>
<accession>Q04YD0</accession>
<comment type="function">
    <text evidence="1">Peptide chain release factor 2 directs the termination of translation in response to the peptide chain termination codons UGA and UAA.</text>
</comment>
<comment type="subcellular location">
    <subcellularLocation>
        <location evidence="1">Cytoplasm</location>
    </subcellularLocation>
</comment>
<comment type="PTM">
    <text evidence="1">Methylated by PrmC. Methylation increases the termination efficiency of RF2.</text>
</comment>
<comment type="similarity">
    <text evidence="1">Belongs to the prokaryotic/mitochondrial release factor family.</text>
</comment>
<protein>
    <recommendedName>
        <fullName evidence="1">Peptide chain release factor 2</fullName>
        <shortName evidence="1">RF-2</shortName>
    </recommendedName>
</protein>
<organism>
    <name type="scientific">Leptospira borgpetersenii serovar Hardjo-bovis (strain L550)</name>
    <dbReference type="NCBI Taxonomy" id="355276"/>
    <lineage>
        <taxon>Bacteria</taxon>
        <taxon>Pseudomonadati</taxon>
        <taxon>Spirochaetota</taxon>
        <taxon>Spirochaetia</taxon>
        <taxon>Leptospirales</taxon>
        <taxon>Leptospiraceae</taxon>
        <taxon>Leptospira</taxon>
    </lineage>
</organism>